<comment type="function">
    <text evidence="1">One of the primary rRNA binding proteins, it binds directly near the 3'-end of the 23S rRNA, where it nucleates assembly of the 50S subunit.</text>
</comment>
<comment type="subunit">
    <text evidence="1">Part of the 50S ribosomal subunit. Forms a cluster with proteins L14 and L19.</text>
</comment>
<comment type="similarity">
    <text evidence="1">Belongs to the universal ribosomal protein uL3 family.</text>
</comment>
<dbReference type="EMBL" id="CP000909">
    <property type="protein sequence ID" value="ABY35578.1"/>
    <property type="molecule type" value="Genomic_DNA"/>
</dbReference>
<dbReference type="RefSeq" id="WP_012258231.1">
    <property type="nucleotide sequence ID" value="NC_010175.1"/>
</dbReference>
<dbReference type="RefSeq" id="YP_001635967.1">
    <property type="nucleotide sequence ID" value="NC_010175.1"/>
</dbReference>
<dbReference type="SMR" id="A9WH66"/>
<dbReference type="FunCoup" id="A9WH66">
    <property type="interactions" value="528"/>
</dbReference>
<dbReference type="STRING" id="324602.Caur_2369"/>
<dbReference type="EnsemblBacteria" id="ABY35578">
    <property type="protein sequence ID" value="ABY35578"/>
    <property type="gene ID" value="Caur_2369"/>
</dbReference>
<dbReference type="KEGG" id="cau:Caur_2369"/>
<dbReference type="PATRIC" id="fig|324602.8.peg.2683"/>
<dbReference type="eggNOG" id="COG0087">
    <property type="taxonomic scope" value="Bacteria"/>
</dbReference>
<dbReference type="HOGENOM" id="CLU_044142_4_1_0"/>
<dbReference type="InParanoid" id="A9WH66"/>
<dbReference type="Proteomes" id="UP000002008">
    <property type="component" value="Chromosome"/>
</dbReference>
<dbReference type="GO" id="GO:0022625">
    <property type="term" value="C:cytosolic large ribosomal subunit"/>
    <property type="evidence" value="ECO:0000318"/>
    <property type="project" value="GO_Central"/>
</dbReference>
<dbReference type="GO" id="GO:0019843">
    <property type="term" value="F:rRNA binding"/>
    <property type="evidence" value="ECO:0007669"/>
    <property type="project" value="UniProtKB-UniRule"/>
</dbReference>
<dbReference type="GO" id="GO:0003735">
    <property type="term" value="F:structural constituent of ribosome"/>
    <property type="evidence" value="ECO:0000318"/>
    <property type="project" value="GO_Central"/>
</dbReference>
<dbReference type="GO" id="GO:0006412">
    <property type="term" value="P:translation"/>
    <property type="evidence" value="ECO:0007669"/>
    <property type="project" value="UniProtKB-UniRule"/>
</dbReference>
<dbReference type="FunFam" id="2.40.30.10:FF:000004">
    <property type="entry name" value="50S ribosomal protein L3"/>
    <property type="match status" value="1"/>
</dbReference>
<dbReference type="FunFam" id="3.30.160.810:FF:000001">
    <property type="entry name" value="50S ribosomal protein L3"/>
    <property type="match status" value="1"/>
</dbReference>
<dbReference type="Gene3D" id="3.30.160.810">
    <property type="match status" value="1"/>
</dbReference>
<dbReference type="Gene3D" id="2.40.30.10">
    <property type="entry name" value="Translation factors"/>
    <property type="match status" value="1"/>
</dbReference>
<dbReference type="HAMAP" id="MF_01325_B">
    <property type="entry name" value="Ribosomal_uL3_B"/>
    <property type="match status" value="1"/>
</dbReference>
<dbReference type="InterPro" id="IPR000597">
    <property type="entry name" value="Ribosomal_uL3"/>
</dbReference>
<dbReference type="InterPro" id="IPR019927">
    <property type="entry name" value="Ribosomal_uL3_bac/org-type"/>
</dbReference>
<dbReference type="InterPro" id="IPR019926">
    <property type="entry name" value="Ribosomal_uL3_CS"/>
</dbReference>
<dbReference type="InterPro" id="IPR009000">
    <property type="entry name" value="Transl_B-barrel_sf"/>
</dbReference>
<dbReference type="NCBIfam" id="TIGR03625">
    <property type="entry name" value="L3_bact"/>
    <property type="match status" value="1"/>
</dbReference>
<dbReference type="PANTHER" id="PTHR11229">
    <property type="entry name" value="50S RIBOSOMAL PROTEIN L3"/>
    <property type="match status" value="1"/>
</dbReference>
<dbReference type="PANTHER" id="PTHR11229:SF16">
    <property type="entry name" value="LARGE RIBOSOMAL SUBUNIT PROTEIN UL3C"/>
    <property type="match status" value="1"/>
</dbReference>
<dbReference type="Pfam" id="PF00297">
    <property type="entry name" value="Ribosomal_L3"/>
    <property type="match status" value="1"/>
</dbReference>
<dbReference type="SUPFAM" id="SSF50447">
    <property type="entry name" value="Translation proteins"/>
    <property type="match status" value="1"/>
</dbReference>
<dbReference type="PROSITE" id="PS00474">
    <property type="entry name" value="RIBOSOMAL_L3"/>
    <property type="match status" value="1"/>
</dbReference>
<keyword id="KW-1185">Reference proteome</keyword>
<keyword id="KW-0687">Ribonucleoprotein</keyword>
<keyword id="KW-0689">Ribosomal protein</keyword>
<keyword id="KW-0694">RNA-binding</keyword>
<keyword id="KW-0699">rRNA-binding</keyword>
<evidence type="ECO:0000255" key="1">
    <source>
        <dbReference type="HAMAP-Rule" id="MF_01325"/>
    </source>
</evidence>
<evidence type="ECO:0000256" key="2">
    <source>
        <dbReference type="SAM" id="MobiDB-lite"/>
    </source>
</evidence>
<evidence type="ECO:0000305" key="3"/>
<reference key="1">
    <citation type="journal article" date="2011" name="BMC Genomics">
        <title>Complete genome sequence of the filamentous anoxygenic phototrophic bacterium Chloroflexus aurantiacus.</title>
        <authorList>
            <person name="Tang K.H."/>
            <person name="Barry K."/>
            <person name="Chertkov O."/>
            <person name="Dalin E."/>
            <person name="Han C.S."/>
            <person name="Hauser L.J."/>
            <person name="Honchak B.M."/>
            <person name="Karbach L.E."/>
            <person name="Land M.L."/>
            <person name="Lapidus A."/>
            <person name="Larimer F.W."/>
            <person name="Mikhailova N."/>
            <person name="Pitluck S."/>
            <person name="Pierson B.K."/>
            <person name="Blankenship R.E."/>
        </authorList>
    </citation>
    <scope>NUCLEOTIDE SEQUENCE [LARGE SCALE GENOMIC DNA]</scope>
    <source>
        <strain>ATCC 29366 / DSM 635 / J-10-fl</strain>
    </source>
</reference>
<gene>
    <name evidence="1" type="primary">rplC</name>
    <name type="ordered locus">Caur_2369</name>
</gene>
<accession>A9WH66</accession>
<name>RL3_CHLAA</name>
<protein>
    <recommendedName>
        <fullName evidence="1">Large ribosomal subunit protein uL3</fullName>
    </recommendedName>
    <alternativeName>
        <fullName evidence="3">50S ribosomal protein L3</fullName>
    </alternativeName>
</protein>
<feature type="chain" id="PRO_1000086431" description="Large ribosomal subunit protein uL3">
    <location>
        <begin position="1"/>
        <end position="210"/>
    </location>
</feature>
<feature type="region of interest" description="Disordered" evidence="2">
    <location>
        <begin position="126"/>
        <end position="152"/>
    </location>
</feature>
<organism>
    <name type="scientific">Chloroflexus aurantiacus (strain ATCC 29366 / DSM 635 / J-10-fl)</name>
    <dbReference type="NCBI Taxonomy" id="324602"/>
    <lineage>
        <taxon>Bacteria</taxon>
        <taxon>Bacillati</taxon>
        <taxon>Chloroflexota</taxon>
        <taxon>Chloroflexia</taxon>
        <taxon>Chloroflexales</taxon>
        <taxon>Chloroflexineae</taxon>
        <taxon>Chloroflexaceae</taxon>
        <taxon>Chloroflexus</taxon>
    </lineage>
</organism>
<sequence>MIHGLLGRKIGMMQYFTAQGMAIPVTVIAAGPCIVTQIRTPERDGYSAVQLGYEEVEPRKLTKPQQGHLKASGGKMLRYLREFSADDPQAHTPGEVVTVELFRPGQKVDISGTSKGRGFAGVVKRHGFRGGPKTHGQSDRHRAPGSIGAGTTPGRVWKGQRMAGRMGGTRVTIQNLEVVEVLPEQNLLLVKGSVPGARNGLLQIRKAVKG</sequence>
<proteinExistence type="inferred from homology"/>